<comment type="function">
    <text>Actins are highly conserved proteins that are involved in various types of cell motility and are ubiquitously expressed in all eukaryotic cells.</text>
</comment>
<comment type="function">
    <text>Multiple isoforms are involved in various cellular functions such as cytoskeleton structure, cell mobility, chromosome movement and muscle contraction.</text>
</comment>
<comment type="catalytic activity">
    <reaction evidence="2">
        <text>ATP + H2O = ADP + phosphate + H(+)</text>
        <dbReference type="Rhea" id="RHEA:13065"/>
        <dbReference type="ChEBI" id="CHEBI:15377"/>
        <dbReference type="ChEBI" id="CHEBI:15378"/>
        <dbReference type="ChEBI" id="CHEBI:30616"/>
        <dbReference type="ChEBI" id="CHEBI:43474"/>
        <dbReference type="ChEBI" id="CHEBI:456216"/>
    </reaction>
</comment>
<comment type="subcellular location">
    <subcellularLocation>
        <location>Cytoplasm</location>
        <location>Cytoskeleton</location>
    </subcellularLocation>
</comment>
<comment type="PTM">
    <text evidence="1">Oxidation of Met-45 to form methionine sulfoxide promotes actin filament depolymerization. Methionine sulfoxide is produced stereospecifically, but it is not known whether the (S)-S-oxide or the (R)-S-oxide is produced (By similarity).</text>
</comment>
<comment type="miscellaneous">
    <text>There are at least 5 different actin genes in this organism.</text>
</comment>
<comment type="similarity">
    <text evidence="3">Belongs to the actin family.</text>
</comment>
<organism>
    <name type="scientific">Bombyx mori</name>
    <name type="common">Silk moth</name>
    <dbReference type="NCBI Taxonomy" id="7091"/>
    <lineage>
        <taxon>Eukaryota</taxon>
        <taxon>Metazoa</taxon>
        <taxon>Ecdysozoa</taxon>
        <taxon>Arthropoda</taxon>
        <taxon>Hexapoda</taxon>
        <taxon>Insecta</taxon>
        <taxon>Pterygota</taxon>
        <taxon>Neoptera</taxon>
        <taxon>Endopterygota</taxon>
        <taxon>Lepidoptera</taxon>
        <taxon>Glossata</taxon>
        <taxon>Ditrysia</taxon>
        <taxon>Bombycoidea</taxon>
        <taxon>Bombycidae</taxon>
        <taxon>Bombycinae</taxon>
        <taxon>Bombyx</taxon>
    </lineage>
</organism>
<sequence>MCDDDAGALVVDNGSGMCKAGFAGDDAPRAVFPSIVGRPRHQGVMVGMGQKDSYVGDEAQSKRGILTLKYPIEHGIITNWDDMEKIWHHTFYNELRVAPEEHPILLTEAPLNPKANREKMTQIMFETFNCPAMYVAIQAVLSLYASGRTTGIVLDSGDGVSHTVPIYEGYALPHAILRLDLAGRDLTDYLMKILTERGYSFTTTAEREIVRDIKEKLCYVALDFEQEMQTAAASTSLEKSYELPDGQVITIGNERFRCPEALFQPSFLGMESCGIHETVYNSIMKCDVDIRKDLYANTVLSGGTTMYPGIADRMQKEITALAPSTIKIKIIAPPERKYSVWIGGSILASLSTFQQMWISKQEYDESGPGIVHRKCF</sequence>
<name>ACT2_BOMMO</name>
<proteinExistence type="inferred from homology"/>
<feature type="propeptide" id="PRO_0000000634" description="Removed in mature form" evidence="1">
    <location>
        <begin position="1"/>
        <end position="2"/>
    </location>
</feature>
<feature type="chain" id="PRO_0000000635" description="Actin, muscle-type A2">
    <location>
        <begin position="3"/>
        <end position="376"/>
    </location>
</feature>
<feature type="modified residue" description="N-acetylaspartate" evidence="1">
    <location>
        <position position="3"/>
    </location>
</feature>
<feature type="modified residue" description="Methionine sulfoxide" evidence="1">
    <location>
        <position position="45"/>
    </location>
</feature>
<feature type="modified residue" description="Methionine sulfoxide" evidence="1">
    <location>
        <position position="48"/>
    </location>
</feature>
<protein>
    <recommendedName>
        <fullName>Actin, muscle-type A2</fullName>
        <ecNumber evidence="2">3.6.4.-</ecNumber>
    </recommendedName>
</protein>
<evidence type="ECO:0000250" key="1"/>
<evidence type="ECO:0000250" key="2">
    <source>
        <dbReference type="UniProtKB" id="P68137"/>
    </source>
</evidence>
<evidence type="ECO:0000305" key="3"/>
<accession>P07837</accession>
<dbReference type="EC" id="3.6.4.-" evidence="2"/>
<dbReference type="EMBL" id="X06363">
    <property type="protein sequence ID" value="CAA29661.1"/>
    <property type="molecule type" value="Genomic_DNA"/>
</dbReference>
<dbReference type="PIR" id="S07382">
    <property type="entry name" value="S07382"/>
</dbReference>
<dbReference type="RefSeq" id="NP_001119725.1">
    <property type="nucleotide sequence ID" value="NM_001126253.1"/>
</dbReference>
<dbReference type="SMR" id="P07837"/>
<dbReference type="FunCoup" id="P07837">
    <property type="interactions" value="8"/>
</dbReference>
<dbReference type="STRING" id="7091.P07837"/>
<dbReference type="EnsemblMetazoa" id="NM_001126253.1">
    <property type="protein sequence ID" value="NP_001119725.1"/>
    <property type="gene ID" value="GeneID_100145914"/>
</dbReference>
<dbReference type="GeneID" id="100145914"/>
<dbReference type="KEGG" id="bmor:100145914"/>
<dbReference type="CTD" id="100145914"/>
<dbReference type="HOGENOM" id="CLU_027965_0_2_1"/>
<dbReference type="InParanoid" id="P07837"/>
<dbReference type="OrthoDB" id="129748at7088"/>
<dbReference type="Proteomes" id="UP000005204">
    <property type="component" value="Unassembled WGS sequence"/>
</dbReference>
<dbReference type="GO" id="GO:0005737">
    <property type="term" value="C:cytoplasm"/>
    <property type="evidence" value="ECO:0007669"/>
    <property type="project" value="UniProtKB-KW"/>
</dbReference>
<dbReference type="GO" id="GO:0005856">
    <property type="term" value="C:cytoskeleton"/>
    <property type="evidence" value="ECO:0007669"/>
    <property type="project" value="UniProtKB-SubCell"/>
</dbReference>
<dbReference type="GO" id="GO:0005524">
    <property type="term" value="F:ATP binding"/>
    <property type="evidence" value="ECO:0007669"/>
    <property type="project" value="UniProtKB-KW"/>
</dbReference>
<dbReference type="GO" id="GO:0016787">
    <property type="term" value="F:hydrolase activity"/>
    <property type="evidence" value="ECO:0007669"/>
    <property type="project" value="UniProtKB-KW"/>
</dbReference>
<dbReference type="CDD" id="cd10224">
    <property type="entry name" value="ASKHA_NBD_actin"/>
    <property type="match status" value="1"/>
</dbReference>
<dbReference type="FunFam" id="2.30.36.70:FF:000001">
    <property type="entry name" value="Actin, alpha skeletal muscle"/>
    <property type="match status" value="1"/>
</dbReference>
<dbReference type="FunFam" id="3.30.420.40:FF:000131">
    <property type="entry name" value="Actin, alpha skeletal muscle"/>
    <property type="match status" value="1"/>
</dbReference>
<dbReference type="FunFam" id="3.30.420.40:FF:000291">
    <property type="entry name" value="Actin, alpha skeletal muscle"/>
    <property type="match status" value="1"/>
</dbReference>
<dbReference type="FunFam" id="3.90.640.10:FF:000047">
    <property type="entry name" value="Actin, alpha skeletal muscle"/>
    <property type="match status" value="1"/>
</dbReference>
<dbReference type="FunFam" id="3.30.420.40:FF:000058">
    <property type="entry name" value="Putative actin-related protein 5"/>
    <property type="match status" value="1"/>
</dbReference>
<dbReference type="Gene3D" id="3.30.420.40">
    <property type="match status" value="2"/>
</dbReference>
<dbReference type="Gene3D" id="3.90.640.10">
    <property type="entry name" value="Actin, Chain A, domain 4"/>
    <property type="match status" value="1"/>
</dbReference>
<dbReference type="InterPro" id="IPR004000">
    <property type="entry name" value="Actin"/>
</dbReference>
<dbReference type="InterPro" id="IPR020902">
    <property type="entry name" value="Actin/actin-like_CS"/>
</dbReference>
<dbReference type="InterPro" id="IPR004001">
    <property type="entry name" value="Actin_CS"/>
</dbReference>
<dbReference type="InterPro" id="IPR043129">
    <property type="entry name" value="ATPase_NBD"/>
</dbReference>
<dbReference type="PANTHER" id="PTHR11937">
    <property type="entry name" value="ACTIN"/>
    <property type="match status" value="1"/>
</dbReference>
<dbReference type="Pfam" id="PF00022">
    <property type="entry name" value="Actin"/>
    <property type="match status" value="1"/>
</dbReference>
<dbReference type="PRINTS" id="PR00190">
    <property type="entry name" value="ACTIN"/>
</dbReference>
<dbReference type="SMART" id="SM00268">
    <property type="entry name" value="ACTIN"/>
    <property type="match status" value="1"/>
</dbReference>
<dbReference type="SUPFAM" id="SSF53067">
    <property type="entry name" value="Actin-like ATPase domain"/>
    <property type="match status" value="2"/>
</dbReference>
<dbReference type="PROSITE" id="PS00406">
    <property type="entry name" value="ACTINS_1"/>
    <property type="match status" value="1"/>
</dbReference>
<dbReference type="PROSITE" id="PS00432">
    <property type="entry name" value="ACTINS_2"/>
    <property type="match status" value="1"/>
</dbReference>
<dbReference type="PROSITE" id="PS01132">
    <property type="entry name" value="ACTINS_ACT_LIKE"/>
    <property type="match status" value="1"/>
</dbReference>
<keyword id="KW-0007">Acetylation</keyword>
<keyword id="KW-0067">ATP-binding</keyword>
<keyword id="KW-0963">Cytoplasm</keyword>
<keyword id="KW-0206">Cytoskeleton</keyword>
<keyword id="KW-0378">Hydrolase</keyword>
<keyword id="KW-0547">Nucleotide-binding</keyword>
<keyword id="KW-0558">Oxidation</keyword>
<keyword id="KW-1185">Reference proteome</keyword>
<reference key="1">
    <citation type="journal article" date="1987" name="Nucleic Acids Res.">
        <title>Nucleotide sequence of the coding region of two actin genes in Bombyx mori.</title>
        <authorList>
            <person name="Mounier N."/>
            <person name="Gaillard J."/>
            <person name="Prudhomme J.-C."/>
        </authorList>
    </citation>
    <scope>NUCLEOTIDE SEQUENCE [GENOMIC DNA]</scope>
    <source>
        <strain>703</strain>
    </source>
</reference>